<dbReference type="EMBL" id="AF493604">
    <property type="protein sequence ID" value="AAP13730.1"/>
    <property type="molecule type" value="mRNA"/>
</dbReference>
<dbReference type="EMBL" id="AJ555484">
    <property type="protein sequence ID" value="CAD88474.1"/>
    <property type="molecule type" value="mRNA"/>
</dbReference>
<dbReference type="EMBL" id="AK138913">
    <property type="protein sequence ID" value="BAE23815.1"/>
    <property type="molecule type" value="mRNA"/>
</dbReference>
<dbReference type="EMBL" id="AC153862">
    <property type="status" value="NOT_ANNOTATED_CDS"/>
    <property type="molecule type" value="Genomic_DNA"/>
</dbReference>
<dbReference type="CCDS" id="CCDS23717.1"/>
<dbReference type="RefSeq" id="NP_839989.2">
    <property type="nucleotide sequence ID" value="NM_178258.5"/>
</dbReference>
<dbReference type="SMR" id="Q80XF5"/>
<dbReference type="FunCoup" id="Q80XF5">
    <property type="interactions" value="576"/>
</dbReference>
<dbReference type="STRING" id="10090.ENSMUSP00000042642"/>
<dbReference type="iPTMnet" id="Q80XF5"/>
<dbReference type="PhosphoSitePlus" id="Q80XF5"/>
<dbReference type="PaxDb" id="10090-ENSMUSP00000042642"/>
<dbReference type="ProteomicsDB" id="269516"/>
<dbReference type="Antibodypedia" id="19779">
    <property type="antibodies" value="377 antibodies from 36 providers"/>
</dbReference>
<dbReference type="DNASU" id="237310"/>
<dbReference type="Ensembl" id="ENSMUST00000036564.8">
    <property type="protein sequence ID" value="ENSMUSP00000042642.8"/>
    <property type="gene ID" value="ENSMUSG00000039760.9"/>
</dbReference>
<dbReference type="GeneID" id="237310"/>
<dbReference type="KEGG" id="mmu:237310"/>
<dbReference type="UCSC" id="uc007enh.1">
    <property type="organism name" value="mouse"/>
</dbReference>
<dbReference type="AGR" id="MGI:2665114"/>
<dbReference type="CTD" id="116379"/>
<dbReference type="MGI" id="MGI:2665114">
    <property type="gene designation" value="Il22ra2"/>
</dbReference>
<dbReference type="VEuPathDB" id="HostDB:ENSMUSG00000039760"/>
<dbReference type="eggNOG" id="ENOG502S2NT">
    <property type="taxonomic scope" value="Eukaryota"/>
</dbReference>
<dbReference type="GeneTree" id="ENSGT00940000161124"/>
<dbReference type="HOGENOM" id="CLU_081158_1_0_1"/>
<dbReference type="InParanoid" id="Q80XF5"/>
<dbReference type="OMA" id="SMENYYE"/>
<dbReference type="OrthoDB" id="10007376at2759"/>
<dbReference type="PhylomeDB" id="Q80XF5"/>
<dbReference type="TreeFam" id="TF332537"/>
<dbReference type="Reactome" id="R-MMU-8854691">
    <property type="pathway name" value="Interleukin-20 family signaling"/>
</dbReference>
<dbReference type="BioGRID-ORCS" id="237310">
    <property type="hits" value="1 hit in 80 CRISPR screens"/>
</dbReference>
<dbReference type="PRO" id="PR:Q80XF5"/>
<dbReference type="Proteomes" id="UP000000589">
    <property type="component" value="Chromosome 10"/>
</dbReference>
<dbReference type="RNAct" id="Q80XF5">
    <property type="molecule type" value="protein"/>
</dbReference>
<dbReference type="Bgee" id="ENSMUSG00000039760">
    <property type="expression patterns" value="Expressed in peripheral lymph node and 26 other cell types or tissues"/>
</dbReference>
<dbReference type="GO" id="GO:0005829">
    <property type="term" value="C:cytosol"/>
    <property type="evidence" value="ECO:0000314"/>
    <property type="project" value="MGI"/>
</dbReference>
<dbReference type="GO" id="GO:0005576">
    <property type="term" value="C:extracellular region"/>
    <property type="evidence" value="ECO:0007669"/>
    <property type="project" value="UniProtKB-SubCell"/>
</dbReference>
<dbReference type="GO" id="GO:0042017">
    <property type="term" value="F:interleukin-22 binding"/>
    <property type="evidence" value="ECO:0007669"/>
    <property type="project" value="Ensembl"/>
</dbReference>
<dbReference type="GO" id="GO:0042018">
    <property type="term" value="F:interleukin-22 receptor activity"/>
    <property type="evidence" value="ECO:0007669"/>
    <property type="project" value="Ensembl"/>
</dbReference>
<dbReference type="GO" id="GO:0050728">
    <property type="term" value="P:negative regulation of inflammatory response"/>
    <property type="evidence" value="ECO:0000315"/>
    <property type="project" value="MGI"/>
</dbReference>
<dbReference type="CDD" id="cd00063">
    <property type="entry name" value="FN3"/>
    <property type="match status" value="1"/>
</dbReference>
<dbReference type="FunFam" id="2.60.40.10:FF:000348">
    <property type="entry name" value="Interleukin 20 receptor subunit alpha"/>
    <property type="match status" value="1"/>
</dbReference>
<dbReference type="FunFam" id="2.60.40.10:FF:001095">
    <property type="entry name" value="Interleukin 22 receptor, alpha 2"/>
    <property type="match status" value="1"/>
</dbReference>
<dbReference type="Gene3D" id="2.60.40.10">
    <property type="entry name" value="Immunoglobulins"/>
    <property type="match status" value="2"/>
</dbReference>
<dbReference type="InterPro" id="IPR003961">
    <property type="entry name" value="FN3_dom"/>
</dbReference>
<dbReference type="InterPro" id="IPR036116">
    <property type="entry name" value="FN3_sf"/>
</dbReference>
<dbReference type="InterPro" id="IPR013783">
    <property type="entry name" value="Ig-like_fold"/>
</dbReference>
<dbReference type="InterPro" id="IPR015373">
    <property type="entry name" value="Interferon/interleukin_rcp_dom"/>
</dbReference>
<dbReference type="InterPro" id="IPR050650">
    <property type="entry name" value="Type-II_Cytokine-TF_Rcpt"/>
</dbReference>
<dbReference type="PANTHER" id="PTHR20859">
    <property type="entry name" value="INTERFERON/INTERLEUKIN RECEPTOR"/>
    <property type="match status" value="1"/>
</dbReference>
<dbReference type="PANTHER" id="PTHR20859:SF51">
    <property type="entry name" value="INTERLEUKIN-22 RECEPTOR SUBUNIT ALPHA-2"/>
    <property type="match status" value="1"/>
</dbReference>
<dbReference type="Pfam" id="PF09294">
    <property type="entry name" value="Interfer-bind"/>
    <property type="match status" value="1"/>
</dbReference>
<dbReference type="Pfam" id="PF01108">
    <property type="entry name" value="Tissue_fac"/>
    <property type="match status" value="1"/>
</dbReference>
<dbReference type="SUPFAM" id="SSF49265">
    <property type="entry name" value="Fibronectin type III"/>
    <property type="match status" value="2"/>
</dbReference>
<dbReference type="PROSITE" id="PS50853">
    <property type="entry name" value="FN3"/>
    <property type="match status" value="2"/>
</dbReference>
<comment type="function">
    <text evidence="5">Receptor for IL22. Binds to IL22, prevents interaction with the functional IL-22R complex and blocks the activity of IL22 (in vitro). May play an important role as an IL22 antagonist in the regulation of inflammatory responses.</text>
</comment>
<comment type="subcellular location">
    <subcellularLocation>
        <location evidence="5">Secreted</location>
    </subcellularLocation>
</comment>
<comment type="tissue specificity">
    <text evidence="6">Highly expressed in lymph nodes and at lower levels in lung, spleen, and thymus. Not expressed in kidney, liver and heart.</text>
</comment>
<comment type="similarity">
    <text evidence="8">Belongs to the type II cytokine receptor family.</text>
</comment>
<protein>
    <recommendedName>
        <fullName>Interleukin-22 receptor subunit alpha-2</fullName>
        <shortName>IL-22 receptor subunit alpha-2</shortName>
        <shortName>IL-22R-alpha-2</shortName>
        <shortName>IL-22RA2</shortName>
    </recommendedName>
    <alternativeName>
        <fullName>Cytokine receptor family type 2, soluble 1</fullName>
        <shortName>CRF2-S1</shortName>
    </alternativeName>
    <alternativeName>
        <fullName>Interleukin-22-binding protein</fullName>
        <shortName>IL-22BP</shortName>
        <shortName>IL22BP</shortName>
    </alternativeName>
    <alternativeName>
        <fullName>ZcytoR16</fullName>
    </alternativeName>
</protein>
<reference key="1">
    <citation type="journal article" date="2003" name="Genes Immun.">
        <title>Cloning and characterization of mouse IL-22 binding protein.</title>
        <authorList>
            <person name="Wei C.-C."/>
            <person name="Ho T.-W."/>
            <person name="Liang W.-G."/>
            <person name="Chen G.-Y."/>
            <person name="Chang M.-S."/>
        </authorList>
    </citation>
    <scope>NUCLEOTIDE SEQUENCE [MRNA]</scope>
    <scope>FUNCTION</scope>
    <scope>SUBCELLULAR LOCATION</scope>
    <source>
        <strain>BALB/cJ</strain>
    </source>
</reference>
<reference key="2">
    <citation type="journal article" date="2004" name="Genes Immun.">
        <title>Cloning of murine IL-22 receptor alpha 2 and comparison with its human counterpart.</title>
        <authorList>
            <person name="Weiss B."/>
            <person name="Wolk K."/>
            <person name="Gruenberg B.H."/>
            <person name="Volk H.D."/>
            <person name="Sterry W."/>
            <person name="Asadullah K."/>
            <person name="Sabat R."/>
        </authorList>
    </citation>
    <scope>NUCLEOTIDE SEQUENCE [MRNA]</scope>
    <scope>TISSUE SPECIFICITY</scope>
    <source>
        <strain>BALB/cJ</strain>
        <tissue>Spleen</tissue>
    </source>
</reference>
<reference key="3">
    <citation type="journal article" date="2005" name="Science">
        <title>The transcriptional landscape of the mammalian genome.</title>
        <authorList>
            <person name="Carninci P."/>
            <person name="Kasukawa T."/>
            <person name="Katayama S."/>
            <person name="Gough J."/>
            <person name="Frith M.C."/>
            <person name="Maeda N."/>
            <person name="Oyama R."/>
            <person name="Ravasi T."/>
            <person name="Lenhard B."/>
            <person name="Wells C."/>
            <person name="Kodzius R."/>
            <person name="Shimokawa K."/>
            <person name="Bajic V.B."/>
            <person name="Brenner S.E."/>
            <person name="Batalov S."/>
            <person name="Forrest A.R."/>
            <person name="Zavolan M."/>
            <person name="Davis M.J."/>
            <person name="Wilming L.G."/>
            <person name="Aidinis V."/>
            <person name="Allen J.E."/>
            <person name="Ambesi-Impiombato A."/>
            <person name="Apweiler R."/>
            <person name="Aturaliya R.N."/>
            <person name="Bailey T.L."/>
            <person name="Bansal M."/>
            <person name="Baxter L."/>
            <person name="Beisel K.W."/>
            <person name="Bersano T."/>
            <person name="Bono H."/>
            <person name="Chalk A.M."/>
            <person name="Chiu K.P."/>
            <person name="Choudhary V."/>
            <person name="Christoffels A."/>
            <person name="Clutterbuck D.R."/>
            <person name="Crowe M.L."/>
            <person name="Dalla E."/>
            <person name="Dalrymple B.P."/>
            <person name="de Bono B."/>
            <person name="Della Gatta G."/>
            <person name="di Bernardo D."/>
            <person name="Down T."/>
            <person name="Engstrom P."/>
            <person name="Fagiolini M."/>
            <person name="Faulkner G."/>
            <person name="Fletcher C.F."/>
            <person name="Fukushima T."/>
            <person name="Furuno M."/>
            <person name="Futaki S."/>
            <person name="Gariboldi M."/>
            <person name="Georgii-Hemming P."/>
            <person name="Gingeras T.R."/>
            <person name="Gojobori T."/>
            <person name="Green R.E."/>
            <person name="Gustincich S."/>
            <person name="Harbers M."/>
            <person name="Hayashi Y."/>
            <person name="Hensch T.K."/>
            <person name="Hirokawa N."/>
            <person name="Hill D."/>
            <person name="Huminiecki L."/>
            <person name="Iacono M."/>
            <person name="Ikeo K."/>
            <person name="Iwama A."/>
            <person name="Ishikawa T."/>
            <person name="Jakt M."/>
            <person name="Kanapin A."/>
            <person name="Katoh M."/>
            <person name="Kawasawa Y."/>
            <person name="Kelso J."/>
            <person name="Kitamura H."/>
            <person name="Kitano H."/>
            <person name="Kollias G."/>
            <person name="Krishnan S.P."/>
            <person name="Kruger A."/>
            <person name="Kummerfeld S.K."/>
            <person name="Kurochkin I.V."/>
            <person name="Lareau L.F."/>
            <person name="Lazarevic D."/>
            <person name="Lipovich L."/>
            <person name="Liu J."/>
            <person name="Liuni S."/>
            <person name="McWilliam S."/>
            <person name="Madan Babu M."/>
            <person name="Madera M."/>
            <person name="Marchionni L."/>
            <person name="Matsuda H."/>
            <person name="Matsuzawa S."/>
            <person name="Miki H."/>
            <person name="Mignone F."/>
            <person name="Miyake S."/>
            <person name="Morris K."/>
            <person name="Mottagui-Tabar S."/>
            <person name="Mulder N."/>
            <person name="Nakano N."/>
            <person name="Nakauchi H."/>
            <person name="Ng P."/>
            <person name="Nilsson R."/>
            <person name="Nishiguchi S."/>
            <person name="Nishikawa S."/>
            <person name="Nori F."/>
            <person name="Ohara O."/>
            <person name="Okazaki Y."/>
            <person name="Orlando V."/>
            <person name="Pang K.C."/>
            <person name="Pavan W.J."/>
            <person name="Pavesi G."/>
            <person name="Pesole G."/>
            <person name="Petrovsky N."/>
            <person name="Piazza S."/>
            <person name="Reed J."/>
            <person name="Reid J.F."/>
            <person name="Ring B.Z."/>
            <person name="Ringwald M."/>
            <person name="Rost B."/>
            <person name="Ruan Y."/>
            <person name="Salzberg S.L."/>
            <person name="Sandelin A."/>
            <person name="Schneider C."/>
            <person name="Schoenbach C."/>
            <person name="Sekiguchi K."/>
            <person name="Semple C.A."/>
            <person name="Seno S."/>
            <person name="Sessa L."/>
            <person name="Sheng Y."/>
            <person name="Shibata Y."/>
            <person name="Shimada H."/>
            <person name="Shimada K."/>
            <person name="Silva D."/>
            <person name="Sinclair B."/>
            <person name="Sperling S."/>
            <person name="Stupka E."/>
            <person name="Sugiura K."/>
            <person name="Sultana R."/>
            <person name="Takenaka Y."/>
            <person name="Taki K."/>
            <person name="Tammoja K."/>
            <person name="Tan S.L."/>
            <person name="Tang S."/>
            <person name="Taylor M.S."/>
            <person name="Tegner J."/>
            <person name="Teichmann S.A."/>
            <person name="Ueda H.R."/>
            <person name="van Nimwegen E."/>
            <person name="Verardo R."/>
            <person name="Wei C.L."/>
            <person name="Yagi K."/>
            <person name="Yamanishi H."/>
            <person name="Zabarovsky E."/>
            <person name="Zhu S."/>
            <person name="Zimmer A."/>
            <person name="Hide W."/>
            <person name="Bult C."/>
            <person name="Grimmond S.M."/>
            <person name="Teasdale R.D."/>
            <person name="Liu E.T."/>
            <person name="Brusic V."/>
            <person name="Quackenbush J."/>
            <person name="Wahlestedt C."/>
            <person name="Mattick J.S."/>
            <person name="Hume D.A."/>
            <person name="Kai C."/>
            <person name="Sasaki D."/>
            <person name="Tomaru Y."/>
            <person name="Fukuda S."/>
            <person name="Kanamori-Katayama M."/>
            <person name="Suzuki M."/>
            <person name="Aoki J."/>
            <person name="Arakawa T."/>
            <person name="Iida J."/>
            <person name="Imamura K."/>
            <person name="Itoh M."/>
            <person name="Kato T."/>
            <person name="Kawaji H."/>
            <person name="Kawagashira N."/>
            <person name="Kawashima T."/>
            <person name="Kojima M."/>
            <person name="Kondo S."/>
            <person name="Konno H."/>
            <person name="Nakano K."/>
            <person name="Ninomiya N."/>
            <person name="Nishio T."/>
            <person name="Okada M."/>
            <person name="Plessy C."/>
            <person name="Shibata K."/>
            <person name="Shiraki T."/>
            <person name="Suzuki S."/>
            <person name="Tagami M."/>
            <person name="Waki K."/>
            <person name="Watahiki A."/>
            <person name="Okamura-Oho Y."/>
            <person name="Suzuki H."/>
            <person name="Kawai J."/>
            <person name="Hayashizaki Y."/>
        </authorList>
    </citation>
    <scope>NUCLEOTIDE SEQUENCE [LARGE SCALE MRNA]</scope>
    <source>
        <strain>C57BL/6J</strain>
        <tissue>Aorta</tissue>
        <tissue>Vein</tissue>
    </source>
</reference>
<reference key="4">
    <citation type="journal article" date="2009" name="PLoS Biol.">
        <title>Lineage-specific biology revealed by a finished genome assembly of the mouse.</title>
        <authorList>
            <person name="Church D.M."/>
            <person name="Goodstadt L."/>
            <person name="Hillier L.W."/>
            <person name="Zody M.C."/>
            <person name="Goldstein S."/>
            <person name="She X."/>
            <person name="Bult C.J."/>
            <person name="Agarwala R."/>
            <person name="Cherry J.L."/>
            <person name="DiCuccio M."/>
            <person name="Hlavina W."/>
            <person name="Kapustin Y."/>
            <person name="Meric P."/>
            <person name="Maglott D."/>
            <person name="Birtle Z."/>
            <person name="Marques A.C."/>
            <person name="Graves T."/>
            <person name="Zhou S."/>
            <person name="Teague B."/>
            <person name="Potamousis K."/>
            <person name="Churas C."/>
            <person name="Place M."/>
            <person name="Herschleb J."/>
            <person name="Runnheim R."/>
            <person name="Forrest D."/>
            <person name="Amos-Landgraf J."/>
            <person name="Schwartz D.C."/>
            <person name="Cheng Z."/>
            <person name="Lindblad-Toh K."/>
            <person name="Eichler E.E."/>
            <person name="Ponting C.P."/>
        </authorList>
    </citation>
    <scope>NUCLEOTIDE SEQUENCE [LARGE SCALE GENOMIC DNA]</scope>
    <source>
        <strain>C57BL/6J</strain>
    </source>
</reference>
<reference key="5">
    <citation type="journal article" date="2009" name="FEBS Lett.">
        <title>Crystal structure of a soluble decoy receptor IL-22BP bound to interleukin-22.</title>
        <authorList>
            <person name="de Moura P.R."/>
            <person name="Watanabe L."/>
            <person name="Bleicher L."/>
            <person name="Colau D."/>
            <person name="Dumoutier L."/>
            <person name="Lemaire M.M."/>
            <person name="Renauld J.C."/>
            <person name="Polikarpov I."/>
        </authorList>
    </citation>
    <scope>MUTAGENESIS OF TYR-66 AND ARG-118</scope>
</reference>
<feature type="signal peptide" evidence="1">
    <location>
        <begin position="1"/>
        <end position="20"/>
    </location>
</feature>
<feature type="chain" id="PRO_0000011017" description="Interleukin-22 receptor subunit alpha-2">
    <location>
        <begin position="21"/>
        <end position="230"/>
    </location>
</feature>
<feature type="domain" description="Fibronectin type-III 1" evidence="4">
    <location>
        <begin position="29"/>
        <end position="128"/>
    </location>
</feature>
<feature type="domain" description="Fibronectin type-III 2" evidence="4">
    <location>
        <begin position="129"/>
        <end position="230"/>
    </location>
</feature>
<feature type="site" description="Critical for IL22-binding">
    <location>
        <position position="66"/>
    </location>
</feature>
<feature type="site" description="Critical for IL22-binding">
    <location>
        <position position="118"/>
    </location>
</feature>
<feature type="disulfide bond" evidence="2">
    <location>
        <begin position="77"/>
        <end position="85"/>
    </location>
</feature>
<feature type="disulfide bond" evidence="3">
    <location>
        <begin position="205"/>
        <end position="226"/>
    </location>
</feature>
<feature type="mutagenesis site" description="Abolishes IL22-binding." evidence="7">
    <original>Y</original>
    <variation>A</variation>
    <location>
        <position position="66"/>
    </location>
</feature>
<feature type="mutagenesis site" description="Abolishes IL22-binding." evidence="7">
    <original>R</original>
    <variation>A</variation>
    <location>
        <position position="118"/>
    </location>
</feature>
<feature type="sequence conflict" description="In Ref. 1; AAP13730." evidence="8" ref="1">
    <original>E</original>
    <variation>D</variation>
    <location>
        <position position="149"/>
    </location>
</feature>
<feature type="sequence conflict" description="In Ref. 1; AAP13730." evidence="8" ref="1">
    <original>H</original>
    <variation>Q</variation>
    <location>
        <position position="228"/>
    </location>
</feature>
<accession>Q80XF5</accession>
<accession>Q3UU14</accession>
<accession>Q7TNI5</accession>
<keyword id="KW-1015">Disulfide bond</keyword>
<keyword id="KW-0675">Receptor</keyword>
<keyword id="KW-1185">Reference proteome</keyword>
<keyword id="KW-0677">Repeat</keyword>
<keyword id="KW-0964">Secreted</keyword>
<keyword id="KW-0732">Signal</keyword>
<sequence length="230" mass="26613">MMPKHCLLGLLIILLSSATEIQPARVSLTPQKVRFQSRNFHNILHWQAGSSLPSNNSIYFVQYKMYGQSQWEDKVDCWGTTALFCDLTNETLDPYELYYGRVMTACAGRHSAWTRTPRFTPWWETKLDPPVVTITRVNASLRVLLRPPELPNRNQSGKNASMETYYGLVYRVFTINNSLEKEQKAYEGTQRAVEIEGLIPHSSYCVVAEMYQPMFDRRSPRSKERCVHIP</sequence>
<organism>
    <name type="scientific">Mus musculus</name>
    <name type="common">Mouse</name>
    <dbReference type="NCBI Taxonomy" id="10090"/>
    <lineage>
        <taxon>Eukaryota</taxon>
        <taxon>Metazoa</taxon>
        <taxon>Chordata</taxon>
        <taxon>Craniata</taxon>
        <taxon>Vertebrata</taxon>
        <taxon>Euteleostomi</taxon>
        <taxon>Mammalia</taxon>
        <taxon>Eutheria</taxon>
        <taxon>Euarchontoglires</taxon>
        <taxon>Glires</taxon>
        <taxon>Rodentia</taxon>
        <taxon>Myomorpha</taxon>
        <taxon>Muroidea</taxon>
        <taxon>Muridae</taxon>
        <taxon>Murinae</taxon>
        <taxon>Mus</taxon>
        <taxon>Mus</taxon>
    </lineage>
</organism>
<evidence type="ECO:0000250" key="1"/>
<evidence type="ECO:0000250" key="2">
    <source>
        <dbReference type="UniProtKB" id="Q8N6P7"/>
    </source>
</evidence>
<evidence type="ECO:0000250" key="3">
    <source>
        <dbReference type="UniProtKB" id="Q969J5"/>
    </source>
</evidence>
<evidence type="ECO:0000255" key="4">
    <source>
        <dbReference type="PROSITE-ProRule" id="PRU00316"/>
    </source>
</evidence>
<evidence type="ECO:0000269" key="5">
    <source>
    </source>
</evidence>
<evidence type="ECO:0000269" key="6">
    <source>
    </source>
</evidence>
<evidence type="ECO:0000269" key="7">
    <source>
    </source>
</evidence>
<evidence type="ECO:0000305" key="8"/>
<proteinExistence type="evidence at protein level"/>
<gene>
    <name type="primary">Il22ra2</name>
</gene>
<name>I22R2_MOUSE</name>